<accession>Q5FFA6</accession>
<protein>
    <recommendedName>
        <fullName evidence="1">UPF0434 protein ERGA_CDS_01260</fullName>
    </recommendedName>
</protein>
<feature type="chain" id="PRO_0000291087" description="UPF0434 protein ERGA_CDS_01260">
    <location>
        <begin position="1"/>
        <end position="55"/>
    </location>
</feature>
<name>Y126_EHRRG</name>
<gene>
    <name type="ordered locus">ERGA_CDS_01260</name>
</gene>
<proteinExistence type="inferred from homology"/>
<reference key="1">
    <citation type="journal article" date="2006" name="J. Bacteriol.">
        <title>Comparative genomic analysis of three strains of Ehrlichia ruminantium reveals an active process of genome size plasticity.</title>
        <authorList>
            <person name="Frutos R."/>
            <person name="Viari A."/>
            <person name="Ferraz C."/>
            <person name="Morgat A."/>
            <person name="Eychenie S."/>
            <person name="Kandassamy Y."/>
            <person name="Chantal I."/>
            <person name="Bensaid A."/>
            <person name="Coissac E."/>
            <person name="Vachiery N."/>
            <person name="Demaille J."/>
            <person name="Martinez D."/>
        </authorList>
    </citation>
    <scope>NUCLEOTIDE SEQUENCE [LARGE SCALE GENOMIC DNA]</scope>
    <source>
        <strain>Gardel</strain>
    </source>
</reference>
<comment type="similarity">
    <text evidence="1">Belongs to the UPF0434 family.</text>
</comment>
<sequence length="55" mass="6369">MIDKKLLEILVCPLTKEKLEYNKDTNELISQKAKLAFPIRNGIPIMLVDEARKLE</sequence>
<dbReference type="EMBL" id="CR925677">
    <property type="protein sequence ID" value="CAI27578.1"/>
    <property type="molecule type" value="Genomic_DNA"/>
</dbReference>
<dbReference type="SMR" id="Q5FFA6"/>
<dbReference type="KEGG" id="erg:ERGA_CDS_01260"/>
<dbReference type="HOGENOM" id="CLU_155659_2_2_5"/>
<dbReference type="OrthoDB" id="9812205at2"/>
<dbReference type="Proteomes" id="UP000000533">
    <property type="component" value="Chromosome"/>
</dbReference>
<dbReference type="GO" id="GO:0005829">
    <property type="term" value="C:cytosol"/>
    <property type="evidence" value="ECO:0007669"/>
    <property type="project" value="TreeGrafter"/>
</dbReference>
<dbReference type="FunFam" id="2.20.25.10:FF:000002">
    <property type="entry name" value="UPF0434 protein YcaR"/>
    <property type="match status" value="1"/>
</dbReference>
<dbReference type="Gene3D" id="2.20.25.10">
    <property type="match status" value="1"/>
</dbReference>
<dbReference type="HAMAP" id="MF_01187">
    <property type="entry name" value="UPF0434"/>
    <property type="match status" value="1"/>
</dbReference>
<dbReference type="InterPro" id="IPR005651">
    <property type="entry name" value="Trm112-like"/>
</dbReference>
<dbReference type="PANTHER" id="PTHR33505:SF4">
    <property type="entry name" value="PROTEIN PREY, MITOCHONDRIAL"/>
    <property type="match status" value="1"/>
</dbReference>
<dbReference type="PANTHER" id="PTHR33505">
    <property type="entry name" value="ZGC:162634"/>
    <property type="match status" value="1"/>
</dbReference>
<dbReference type="Pfam" id="PF03966">
    <property type="entry name" value="Trm112p"/>
    <property type="match status" value="1"/>
</dbReference>
<dbReference type="SUPFAM" id="SSF158997">
    <property type="entry name" value="Trm112p-like"/>
    <property type="match status" value="1"/>
</dbReference>
<evidence type="ECO:0000255" key="1">
    <source>
        <dbReference type="HAMAP-Rule" id="MF_01187"/>
    </source>
</evidence>
<organism>
    <name type="scientific">Ehrlichia ruminantium (strain Gardel)</name>
    <dbReference type="NCBI Taxonomy" id="302409"/>
    <lineage>
        <taxon>Bacteria</taxon>
        <taxon>Pseudomonadati</taxon>
        <taxon>Pseudomonadota</taxon>
        <taxon>Alphaproteobacteria</taxon>
        <taxon>Rickettsiales</taxon>
        <taxon>Anaplasmataceae</taxon>
        <taxon>Ehrlichia</taxon>
    </lineage>
</organism>